<name>ATPB_STAAT</name>
<gene>
    <name evidence="1" type="primary">atpD</name>
    <name type="ordered locus">USA300HOU_2093</name>
</gene>
<accession>A8YY70</accession>
<proteinExistence type="inferred from homology"/>
<sequence>MGIGRVTQVMGPVIDVRFEHNEVPKINNALVIDVPKEEGTIQLTLEVALQLGDDVVRTIAMDSTDGVQRGMDVKDTGKEISVPVGDETLGRVFNVLGETIDLKEEISDSVRRDPIHRQAPAFDELSTEVQILETGIKVVDLLAPYIKGGKIGLFGGAGVGKTVLIQELINNIAQEHGGISVFAGVGERTREGNDLYFEMSDSGVIKKTAMVFGQMNEPPGARMRVALSGLTMAEYFRDEQGQDVLLFIDNIFRFTQAGSEVSALLGRMPSAVGYQPTLATEMGQLQERITSTTKGSVTSIQAVFVPADDYTDPAPATAFAHLDATTNLERKLTEMGIYPAVDPLASTSRALEPSIVGQEHYEVARDVQSTLQKYRELQDIIAILGMDELSDEDKQTVERARRIQFFLSQNFHVAEQFTGQKGSYVPVKTTVANFKDILDGKYDHIPEDAFRLVGSMDDVIAKAKDMGVEV</sequence>
<protein>
    <recommendedName>
        <fullName evidence="1">ATP synthase subunit beta</fullName>
        <ecNumber evidence="1">7.1.2.2</ecNumber>
    </recommendedName>
    <alternativeName>
        <fullName evidence="1">ATP synthase F1 sector subunit beta</fullName>
    </alternativeName>
    <alternativeName>
        <fullName evidence="1">F-ATPase subunit beta</fullName>
    </alternativeName>
</protein>
<comment type="function">
    <text evidence="1">Produces ATP from ADP in the presence of a proton gradient across the membrane. The catalytic sites are hosted primarily by the beta subunits.</text>
</comment>
<comment type="catalytic activity">
    <reaction evidence="1">
        <text>ATP + H2O + 4 H(+)(in) = ADP + phosphate + 5 H(+)(out)</text>
        <dbReference type="Rhea" id="RHEA:57720"/>
        <dbReference type="ChEBI" id="CHEBI:15377"/>
        <dbReference type="ChEBI" id="CHEBI:15378"/>
        <dbReference type="ChEBI" id="CHEBI:30616"/>
        <dbReference type="ChEBI" id="CHEBI:43474"/>
        <dbReference type="ChEBI" id="CHEBI:456216"/>
        <dbReference type="EC" id="7.1.2.2"/>
    </reaction>
</comment>
<comment type="subunit">
    <text evidence="1">F-type ATPases have 2 components, CF(1) - the catalytic core - and CF(0) - the membrane proton channel. CF(1) has five subunits: alpha(3), beta(3), gamma(1), delta(1), epsilon(1). CF(0) has three main subunits: a(1), b(2) and c(9-12). The alpha and beta chains form an alternating ring which encloses part of the gamma chain. CF(1) is attached to CF(0) by a central stalk formed by the gamma and epsilon chains, while a peripheral stalk is formed by the delta and b chains.</text>
</comment>
<comment type="subcellular location">
    <subcellularLocation>
        <location evidence="1">Cell membrane</location>
        <topology evidence="1">Peripheral membrane protein</topology>
    </subcellularLocation>
</comment>
<comment type="similarity">
    <text evidence="1">Belongs to the ATPase alpha/beta chains family.</text>
</comment>
<feature type="chain" id="PRO_1000086929" description="ATP synthase subunit beta">
    <location>
        <begin position="1"/>
        <end position="470"/>
    </location>
</feature>
<feature type="binding site" evidence="1">
    <location>
        <begin position="155"/>
        <end position="162"/>
    </location>
    <ligand>
        <name>ATP</name>
        <dbReference type="ChEBI" id="CHEBI:30616"/>
    </ligand>
</feature>
<evidence type="ECO:0000255" key="1">
    <source>
        <dbReference type="HAMAP-Rule" id="MF_01347"/>
    </source>
</evidence>
<keyword id="KW-0066">ATP synthesis</keyword>
<keyword id="KW-0067">ATP-binding</keyword>
<keyword id="KW-1003">Cell membrane</keyword>
<keyword id="KW-0139">CF(1)</keyword>
<keyword id="KW-0375">Hydrogen ion transport</keyword>
<keyword id="KW-0406">Ion transport</keyword>
<keyword id="KW-0472">Membrane</keyword>
<keyword id="KW-0547">Nucleotide-binding</keyword>
<keyword id="KW-1278">Translocase</keyword>
<keyword id="KW-0813">Transport</keyword>
<organism>
    <name type="scientific">Staphylococcus aureus (strain USA300 / TCH1516)</name>
    <dbReference type="NCBI Taxonomy" id="451516"/>
    <lineage>
        <taxon>Bacteria</taxon>
        <taxon>Bacillati</taxon>
        <taxon>Bacillota</taxon>
        <taxon>Bacilli</taxon>
        <taxon>Bacillales</taxon>
        <taxon>Staphylococcaceae</taxon>
        <taxon>Staphylococcus</taxon>
    </lineage>
</organism>
<dbReference type="EC" id="7.1.2.2" evidence="1"/>
<dbReference type="EMBL" id="CP000730">
    <property type="protein sequence ID" value="ABX30090.1"/>
    <property type="molecule type" value="Genomic_DNA"/>
</dbReference>
<dbReference type="RefSeq" id="WP_000511135.1">
    <property type="nucleotide sequence ID" value="NC_010079.1"/>
</dbReference>
<dbReference type="SMR" id="A8YY70"/>
<dbReference type="GeneID" id="98346410"/>
<dbReference type="KEGG" id="sax:USA300HOU_2093"/>
<dbReference type="HOGENOM" id="CLU_022398_0_2_9"/>
<dbReference type="GO" id="GO:0005886">
    <property type="term" value="C:plasma membrane"/>
    <property type="evidence" value="ECO:0007669"/>
    <property type="project" value="UniProtKB-SubCell"/>
</dbReference>
<dbReference type="GO" id="GO:0045259">
    <property type="term" value="C:proton-transporting ATP synthase complex"/>
    <property type="evidence" value="ECO:0007669"/>
    <property type="project" value="UniProtKB-KW"/>
</dbReference>
<dbReference type="GO" id="GO:0005524">
    <property type="term" value="F:ATP binding"/>
    <property type="evidence" value="ECO:0007669"/>
    <property type="project" value="UniProtKB-UniRule"/>
</dbReference>
<dbReference type="GO" id="GO:0016887">
    <property type="term" value="F:ATP hydrolysis activity"/>
    <property type="evidence" value="ECO:0007669"/>
    <property type="project" value="InterPro"/>
</dbReference>
<dbReference type="GO" id="GO:0046933">
    <property type="term" value="F:proton-transporting ATP synthase activity, rotational mechanism"/>
    <property type="evidence" value="ECO:0007669"/>
    <property type="project" value="UniProtKB-UniRule"/>
</dbReference>
<dbReference type="CDD" id="cd18110">
    <property type="entry name" value="ATP-synt_F1_beta_C"/>
    <property type="match status" value="1"/>
</dbReference>
<dbReference type="CDD" id="cd18115">
    <property type="entry name" value="ATP-synt_F1_beta_N"/>
    <property type="match status" value="1"/>
</dbReference>
<dbReference type="CDD" id="cd01133">
    <property type="entry name" value="F1-ATPase_beta_CD"/>
    <property type="match status" value="1"/>
</dbReference>
<dbReference type="FunFam" id="1.10.1140.10:FF:000001">
    <property type="entry name" value="ATP synthase subunit beta"/>
    <property type="match status" value="1"/>
</dbReference>
<dbReference type="FunFam" id="2.40.10.170:FF:000005">
    <property type="entry name" value="ATP synthase subunit beta"/>
    <property type="match status" value="1"/>
</dbReference>
<dbReference type="FunFam" id="3.40.50.300:FF:000004">
    <property type="entry name" value="ATP synthase subunit beta"/>
    <property type="match status" value="1"/>
</dbReference>
<dbReference type="Gene3D" id="2.40.10.170">
    <property type="match status" value="1"/>
</dbReference>
<dbReference type="Gene3D" id="1.10.1140.10">
    <property type="entry name" value="Bovine Mitochondrial F1-atpase, Atp Synthase Beta Chain, Chain D, domain 3"/>
    <property type="match status" value="1"/>
</dbReference>
<dbReference type="Gene3D" id="3.40.50.300">
    <property type="entry name" value="P-loop containing nucleotide triphosphate hydrolases"/>
    <property type="match status" value="1"/>
</dbReference>
<dbReference type="HAMAP" id="MF_01347">
    <property type="entry name" value="ATP_synth_beta_bact"/>
    <property type="match status" value="1"/>
</dbReference>
<dbReference type="InterPro" id="IPR003593">
    <property type="entry name" value="AAA+_ATPase"/>
</dbReference>
<dbReference type="InterPro" id="IPR055190">
    <property type="entry name" value="ATP-synt_VA_C"/>
</dbReference>
<dbReference type="InterPro" id="IPR005722">
    <property type="entry name" value="ATP_synth_F1_bsu"/>
</dbReference>
<dbReference type="InterPro" id="IPR020003">
    <property type="entry name" value="ATPase_a/bsu_AS"/>
</dbReference>
<dbReference type="InterPro" id="IPR050053">
    <property type="entry name" value="ATPase_alpha/beta_chains"/>
</dbReference>
<dbReference type="InterPro" id="IPR004100">
    <property type="entry name" value="ATPase_F1/V1/A1_a/bsu_N"/>
</dbReference>
<dbReference type="InterPro" id="IPR036121">
    <property type="entry name" value="ATPase_F1/V1/A1_a/bsu_N_sf"/>
</dbReference>
<dbReference type="InterPro" id="IPR000194">
    <property type="entry name" value="ATPase_F1/V1/A1_a/bsu_nucl-bd"/>
</dbReference>
<dbReference type="InterPro" id="IPR024034">
    <property type="entry name" value="ATPase_F1/V1_b/a_C"/>
</dbReference>
<dbReference type="InterPro" id="IPR027417">
    <property type="entry name" value="P-loop_NTPase"/>
</dbReference>
<dbReference type="NCBIfam" id="TIGR01039">
    <property type="entry name" value="atpD"/>
    <property type="match status" value="1"/>
</dbReference>
<dbReference type="PANTHER" id="PTHR15184">
    <property type="entry name" value="ATP SYNTHASE"/>
    <property type="match status" value="1"/>
</dbReference>
<dbReference type="PANTHER" id="PTHR15184:SF71">
    <property type="entry name" value="ATP SYNTHASE SUBUNIT BETA, MITOCHONDRIAL"/>
    <property type="match status" value="1"/>
</dbReference>
<dbReference type="Pfam" id="PF00006">
    <property type="entry name" value="ATP-synt_ab"/>
    <property type="match status" value="1"/>
</dbReference>
<dbReference type="Pfam" id="PF02874">
    <property type="entry name" value="ATP-synt_ab_N"/>
    <property type="match status" value="1"/>
</dbReference>
<dbReference type="Pfam" id="PF22919">
    <property type="entry name" value="ATP-synt_VA_C"/>
    <property type="match status" value="1"/>
</dbReference>
<dbReference type="SMART" id="SM00382">
    <property type="entry name" value="AAA"/>
    <property type="match status" value="1"/>
</dbReference>
<dbReference type="SUPFAM" id="SSF47917">
    <property type="entry name" value="C-terminal domain of alpha and beta subunits of F1 ATP synthase"/>
    <property type="match status" value="1"/>
</dbReference>
<dbReference type="SUPFAM" id="SSF50615">
    <property type="entry name" value="N-terminal domain of alpha and beta subunits of F1 ATP synthase"/>
    <property type="match status" value="1"/>
</dbReference>
<dbReference type="SUPFAM" id="SSF52540">
    <property type="entry name" value="P-loop containing nucleoside triphosphate hydrolases"/>
    <property type="match status" value="1"/>
</dbReference>
<dbReference type="PROSITE" id="PS00152">
    <property type="entry name" value="ATPASE_ALPHA_BETA"/>
    <property type="match status" value="1"/>
</dbReference>
<reference key="1">
    <citation type="journal article" date="2007" name="BMC Microbiol.">
        <title>Subtle genetic changes enhance virulence of methicillin resistant and sensitive Staphylococcus aureus.</title>
        <authorList>
            <person name="Highlander S.K."/>
            <person name="Hulten K.G."/>
            <person name="Qin X."/>
            <person name="Jiang H."/>
            <person name="Yerrapragada S."/>
            <person name="Mason E.O. Jr."/>
            <person name="Shang Y."/>
            <person name="Williams T.M."/>
            <person name="Fortunov R.M."/>
            <person name="Liu Y."/>
            <person name="Igboeli O."/>
            <person name="Petrosino J."/>
            <person name="Tirumalai M."/>
            <person name="Uzman A."/>
            <person name="Fox G.E."/>
            <person name="Cardenas A.M."/>
            <person name="Muzny D.M."/>
            <person name="Hemphill L."/>
            <person name="Ding Y."/>
            <person name="Dugan S."/>
            <person name="Blyth P.R."/>
            <person name="Buhay C.J."/>
            <person name="Dinh H.H."/>
            <person name="Hawes A.C."/>
            <person name="Holder M."/>
            <person name="Kovar C.L."/>
            <person name="Lee S.L."/>
            <person name="Liu W."/>
            <person name="Nazareth L.V."/>
            <person name="Wang Q."/>
            <person name="Zhou J."/>
            <person name="Kaplan S.L."/>
            <person name="Weinstock G.M."/>
        </authorList>
    </citation>
    <scope>NUCLEOTIDE SEQUENCE [LARGE SCALE GENOMIC DNA]</scope>
    <source>
        <strain>USA300 / TCH1516</strain>
    </source>
</reference>